<accession>P16609</accession>
<name>TRPB_THET2</name>
<organism>
    <name type="scientific">Thermus thermophilus (strain ATCC BAA-163 / DSM 7039 / HB27)</name>
    <dbReference type="NCBI Taxonomy" id="262724"/>
    <lineage>
        <taxon>Bacteria</taxon>
        <taxon>Thermotogati</taxon>
        <taxon>Deinococcota</taxon>
        <taxon>Deinococci</taxon>
        <taxon>Thermales</taxon>
        <taxon>Thermaceae</taxon>
        <taxon>Thermus</taxon>
    </lineage>
</organism>
<gene>
    <name type="primary">trpB</name>
    <name type="ordered locus">TT_C0730</name>
</gene>
<reference key="1">
    <citation type="journal article" date="1990" name="J. Bacteriol.">
        <title>Cloning and sequence analysis of tryptophan synthetase genes of an extreme thermophile, Thermus thermophilus HB27: plasmid transfer from replica-plated Escherichia coli recombinant colonies to competent T. thermophilus cells.</title>
        <authorList>
            <person name="Koyama Y."/>
            <person name="Furukawa K."/>
        </authorList>
    </citation>
    <scope>NUCLEOTIDE SEQUENCE [GENOMIC DNA]</scope>
</reference>
<reference key="2">
    <citation type="journal article" date="2004" name="Nat. Biotechnol.">
        <title>The genome sequence of the extreme thermophile Thermus thermophilus.</title>
        <authorList>
            <person name="Henne A."/>
            <person name="Brueggemann H."/>
            <person name="Raasch C."/>
            <person name="Wiezer A."/>
            <person name="Hartsch T."/>
            <person name="Liesegang H."/>
            <person name="Johann A."/>
            <person name="Lienard T."/>
            <person name="Gohl O."/>
            <person name="Martinez-Arias R."/>
            <person name="Jacobi C."/>
            <person name="Starkuviene V."/>
            <person name="Schlenczeck S."/>
            <person name="Dencker S."/>
            <person name="Huber R."/>
            <person name="Klenk H.-P."/>
            <person name="Kramer W."/>
            <person name="Merkl R."/>
            <person name="Gottschalk G."/>
            <person name="Fritz H.-J."/>
        </authorList>
    </citation>
    <scope>NUCLEOTIDE SEQUENCE [LARGE SCALE GENOMIC DNA]</scope>
    <source>
        <strain>ATCC BAA-163 / DSM 7039 / HB27</strain>
    </source>
</reference>
<reference key="3">
    <citation type="journal article" date="1990" name="FEMS Microbiol. Lett.">
        <title>A plasmid vector for an extreme thermophile, Thermus thermophilus.</title>
        <authorList>
            <person name="Koyama Y."/>
            <person name="Arikawa Y."/>
            <person name="Furukawa K."/>
        </authorList>
    </citation>
    <scope>NUCLEOTIDE SEQUENCE [GENOMIC DNA] OF 1-45</scope>
</reference>
<feature type="chain" id="PRO_0000099015" description="Tryptophan synthase beta chain">
    <location>
        <begin position="1"/>
        <end position="404"/>
    </location>
</feature>
<feature type="modified residue" description="N6-(pyridoxal phosphate)lysine" evidence="1">
    <location>
        <position position="95"/>
    </location>
</feature>
<feature type="strand" evidence="3">
    <location>
        <begin position="14"/>
        <end position="16"/>
    </location>
</feature>
<feature type="turn" evidence="3">
    <location>
        <begin position="26"/>
        <end position="28"/>
    </location>
</feature>
<feature type="helix" evidence="3">
    <location>
        <begin position="29"/>
        <end position="44"/>
    </location>
</feature>
<feature type="helix" evidence="3">
    <location>
        <begin position="46"/>
        <end position="58"/>
    </location>
</feature>
<feature type="strand" evidence="3">
    <location>
        <begin position="66"/>
        <end position="68"/>
    </location>
</feature>
<feature type="helix" evidence="3">
    <location>
        <begin position="70"/>
        <end position="76"/>
    </location>
</feature>
<feature type="strand" evidence="3">
    <location>
        <begin position="78"/>
        <end position="85"/>
    </location>
</feature>
<feature type="helix" evidence="3">
    <location>
        <begin position="86"/>
        <end position="88"/>
    </location>
</feature>
<feature type="helix" evidence="3">
    <location>
        <begin position="90"/>
        <end position="92"/>
    </location>
</feature>
<feature type="helix" evidence="3">
    <location>
        <begin position="96"/>
        <end position="109"/>
    </location>
</feature>
<feature type="strand" evidence="3">
    <location>
        <begin position="113"/>
        <end position="117"/>
    </location>
</feature>
<feature type="strand" evidence="3">
    <location>
        <begin position="119"/>
        <end position="121"/>
    </location>
</feature>
<feature type="helix" evidence="3">
    <location>
        <begin position="122"/>
        <end position="134"/>
    </location>
</feature>
<feature type="strand" evidence="3">
    <location>
        <begin position="137"/>
        <end position="143"/>
    </location>
</feature>
<feature type="helix" evidence="3">
    <location>
        <begin position="144"/>
        <end position="148"/>
    </location>
</feature>
<feature type="helix" evidence="3">
    <location>
        <begin position="151"/>
        <end position="159"/>
    </location>
</feature>
<feature type="strand" evidence="3">
    <location>
        <begin position="163"/>
        <end position="167"/>
    </location>
</feature>
<feature type="helix" evidence="3">
    <location>
        <begin position="174"/>
        <end position="187"/>
    </location>
</feature>
<feature type="turn" evidence="3">
    <location>
        <begin position="188"/>
        <end position="191"/>
    </location>
</feature>
<feature type="strand" evidence="3">
    <location>
        <begin position="192"/>
        <end position="194"/>
    </location>
</feature>
<feature type="strand" evidence="3">
    <location>
        <begin position="199"/>
        <end position="202"/>
    </location>
</feature>
<feature type="helix" evidence="3">
    <location>
        <begin position="205"/>
        <end position="213"/>
    </location>
</feature>
<feature type="helix" evidence="3">
    <location>
        <begin position="215"/>
        <end position="228"/>
    </location>
</feature>
<feature type="strand" evidence="3">
    <location>
        <begin position="233"/>
        <end position="238"/>
    </location>
</feature>
<feature type="strand" evidence="3">
    <location>
        <begin position="240"/>
        <end position="243"/>
    </location>
</feature>
<feature type="helix" evidence="3">
    <location>
        <begin position="244"/>
        <end position="253"/>
    </location>
</feature>
<feature type="strand" evidence="3">
    <location>
        <begin position="261"/>
        <end position="267"/>
    </location>
</feature>
<feature type="strand" evidence="3">
    <location>
        <begin position="272"/>
        <end position="274"/>
    </location>
</feature>
<feature type="helix" evidence="3">
    <location>
        <begin position="276"/>
        <end position="283"/>
    </location>
</feature>
<feature type="strand" evidence="3">
    <location>
        <begin position="286"/>
        <end position="289"/>
    </location>
</feature>
<feature type="strand" evidence="3">
    <location>
        <begin position="292"/>
        <end position="296"/>
    </location>
</feature>
<feature type="helix" evidence="3">
    <location>
        <begin position="321"/>
        <end position="328"/>
    </location>
</feature>
<feature type="strand" evidence="3">
    <location>
        <begin position="331"/>
        <end position="337"/>
    </location>
</feature>
<feature type="helix" evidence="3">
    <location>
        <begin position="339"/>
        <end position="353"/>
    </location>
</feature>
<feature type="helix" evidence="3">
    <location>
        <begin position="359"/>
        <end position="371"/>
    </location>
</feature>
<feature type="turn" evidence="3">
    <location>
        <begin position="372"/>
        <end position="374"/>
    </location>
</feature>
<feature type="strand" evidence="3">
    <location>
        <begin position="380"/>
        <end position="385"/>
    </location>
</feature>
<feature type="helix" evidence="3">
    <location>
        <begin position="389"/>
        <end position="391"/>
    </location>
</feature>
<feature type="helix" evidence="3">
    <location>
        <begin position="393"/>
        <end position="398"/>
    </location>
</feature>
<keyword id="KW-0002">3D-structure</keyword>
<keyword id="KW-0028">Amino-acid biosynthesis</keyword>
<keyword id="KW-0057">Aromatic amino acid biosynthesis</keyword>
<keyword id="KW-0456">Lyase</keyword>
<keyword id="KW-0663">Pyridoxal phosphate</keyword>
<keyword id="KW-0822">Tryptophan biosynthesis</keyword>
<sequence>MLTLPDFPLPDARGRFGPYGGRYVPETLIPALEELEAAYREAKKDPAFLEELDHYLRQFAGRPTPLYHAKRLSEYWGGAQVFLKREDLLHTGAHKINNTLGQALLARRMGKRRVIAETGAGQHGVSVATVAALFGLECVVYMGEEDVRRQALNVFRMKLLGAEVRPVAAGSRTLKDATNEAIRDWITNVRTTFYILGSVVGPHPYPMMVRDFQSVIGEEVKRQSLELFGRLPDALIAAVGGGSNAIGLFAPFAYLPEGRPKLIGVEAAGEGLSTGRHAASIGAGKRGVLHGSYMYLLYDHDGQITPAHSVSAGLDYPGVGPEHSYYADAGVAEYASVTDEEALEGFKLLARLEGIIPALESAHAIAYAAKVVPEMDKDQVVVINLSGRGDKDVTEVMRLLGGEL</sequence>
<protein>
    <recommendedName>
        <fullName>Tryptophan synthase beta chain</fullName>
        <ecNumber>4.2.1.20</ecNumber>
    </recommendedName>
</protein>
<evidence type="ECO:0000250" key="1"/>
<evidence type="ECO:0000305" key="2"/>
<evidence type="ECO:0007829" key="3">
    <source>
        <dbReference type="PDB" id="1X1Q"/>
    </source>
</evidence>
<comment type="function">
    <text evidence="1">The beta subunit is responsible for the synthesis of L-tryptophan from indole and L-serine.</text>
</comment>
<comment type="catalytic activity">
    <reaction>
        <text>(1S,2R)-1-C-(indol-3-yl)glycerol 3-phosphate + L-serine = D-glyceraldehyde 3-phosphate + L-tryptophan + H2O</text>
        <dbReference type="Rhea" id="RHEA:10532"/>
        <dbReference type="ChEBI" id="CHEBI:15377"/>
        <dbReference type="ChEBI" id="CHEBI:33384"/>
        <dbReference type="ChEBI" id="CHEBI:57912"/>
        <dbReference type="ChEBI" id="CHEBI:58866"/>
        <dbReference type="ChEBI" id="CHEBI:59776"/>
        <dbReference type="EC" id="4.2.1.20"/>
    </reaction>
</comment>
<comment type="cofactor">
    <cofactor evidence="1">
        <name>pyridoxal 5'-phosphate</name>
        <dbReference type="ChEBI" id="CHEBI:597326"/>
    </cofactor>
</comment>
<comment type="pathway">
    <text>Amino-acid biosynthesis; L-tryptophan biosynthesis; L-tryptophan from chorismate: step 5/5.</text>
</comment>
<comment type="subunit">
    <text evidence="1">Tetramer of two alpha and two beta chains.</text>
</comment>
<comment type="similarity">
    <text evidence="2">Belongs to the TrpB family.</text>
</comment>
<comment type="sequence caution" evidence="2">
    <conflict type="erroneous initiation">
        <sequence resource="EMBL-CDS" id="AAS81078"/>
    </conflict>
</comment>
<proteinExistence type="evidence at protein level"/>
<dbReference type="EC" id="4.2.1.20"/>
<dbReference type="EMBL" id="M32108">
    <property type="protein sequence ID" value="AAA27508.1"/>
    <property type="molecule type" value="Genomic_DNA"/>
</dbReference>
<dbReference type="EMBL" id="AE017221">
    <property type="protein sequence ID" value="AAS81078.1"/>
    <property type="status" value="ALT_INIT"/>
    <property type="molecule type" value="Genomic_DNA"/>
</dbReference>
<dbReference type="EMBL" id="X58673">
    <property type="protein sequence ID" value="CAA41527.1"/>
    <property type="molecule type" value="Genomic_DNA"/>
</dbReference>
<dbReference type="RefSeq" id="WP_011173169.1">
    <property type="nucleotide sequence ID" value="NZ_CP133179.1"/>
</dbReference>
<dbReference type="PDB" id="1X1Q">
    <property type="method" value="X-ray"/>
    <property type="resolution" value="2.50 A"/>
    <property type="chains" value="A/B=1-404"/>
</dbReference>
<dbReference type="PDBsum" id="1X1Q"/>
<dbReference type="SMR" id="P16609"/>
<dbReference type="GeneID" id="3168938"/>
<dbReference type="KEGG" id="tth:TT_C0730"/>
<dbReference type="eggNOG" id="COG0133">
    <property type="taxonomic scope" value="Bacteria"/>
</dbReference>
<dbReference type="HOGENOM" id="CLU_016734_3_1_0"/>
<dbReference type="OrthoDB" id="9766131at2"/>
<dbReference type="UniPathway" id="UPA00035">
    <property type="reaction ID" value="UER00044"/>
</dbReference>
<dbReference type="EvolutionaryTrace" id="P16609"/>
<dbReference type="Proteomes" id="UP000000592">
    <property type="component" value="Chromosome"/>
</dbReference>
<dbReference type="GO" id="GO:0005737">
    <property type="term" value="C:cytoplasm"/>
    <property type="evidence" value="ECO:0007669"/>
    <property type="project" value="TreeGrafter"/>
</dbReference>
<dbReference type="GO" id="GO:0004834">
    <property type="term" value="F:tryptophan synthase activity"/>
    <property type="evidence" value="ECO:0007669"/>
    <property type="project" value="UniProtKB-UniRule"/>
</dbReference>
<dbReference type="CDD" id="cd06446">
    <property type="entry name" value="Trp-synth_B"/>
    <property type="match status" value="1"/>
</dbReference>
<dbReference type="FunFam" id="3.40.50.1100:FF:000001">
    <property type="entry name" value="Tryptophan synthase beta chain"/>
    <property type="match status" value="1"/>
</dbReference>
<dbReference type="FunFam" id="3.40.50.1100:FF:000004">
    <property type="entry name" value="Tryptophan synthase beta chain"/>
    <property type="match status" value="1"/>
</dbReference>
<dbReference type="Gene3D" id="3.40.50.1100">
    <property type="match status" value="2"/>
</dbReference>
<dbReference type="HAMAP" id="MF_00133">
    <property type="entry name" value="Trp_synth_beta"/>
    <property type="match status" value="1"/>
</dbReference>
<dbReference type="InterPro" id="IPR006653">
    <property type="entry name" value="Trp_synth_b_CS"/>
</dbReference>
<dbReference type="InterPro" id="IPR006654">
    <property type="entry name" value="Trp_synth_beta"/>
</dbReference>
<dbReference type="InterPro" id="IPR023026">
    <property type="entry name" value="Trp_synth_beta/beta-like"/>
</dbReference>
<dbReference type="InterPro" id="IPR001926">
    <property type="entry name" value="TrpB-like_PALP"/>
</dbReference>
<dbReference type="InterPro" id="IPR036052">
    <property type="entry name" value="TrpB-like_PALP_sf"/>
</dbReference>
<dbReference type="NCBIfam" id="TIGR00263">
    <property type="entry name" value="trpB"/>
    <property type="match status" value="1"/>
</dbReference>
<dbReference type="PANTHER" id="PTHR48077:SF3">
    <property type="entry name" value="TRYPTOPHAN SYNTHASE"/>
    <property type="match status" value="1"/>
</dbReference>
<dbReference type="PANTHER" id="PTHR48077">
    <property type="entry name" value="TRYPTOPHAN SYNTHASE-RELATED"/>
    <property type="match status" value="1"/>
</dbReference>
<dbReference type="Pfam" id="PF00291">
    <property type="entry name" value="PALP"/>
    <property type="match status" value="1"/>
</dbReference>
<dbReference type="PIRSF" id="PIRSF001413">
    <property type="entry name" value="Trp_syn_beta"/>
    <property type="match status" value="1"/>
</dbReference>
<dbReference type="SUPFAM" id="SSF53686">
    <property type="entry name" value="Tryptophan synthase beta subunit-like PLP-dependent enzymes"/>
    <property type="match status" value="1"/>
</dbReference>
<dbReference type="PROSITE" id="PS00168">
    <property type="entry name" value="TRP_SYNTHASE_BETA"/>
    <property type="match status" value="1"/>
</dbReference>